<feature type="chain" id="PRO_0000277469" description="Alanyl-tRNA editing protein Aarsd1-A">
    <location>
        <begin position="1"/>
        <end position="412"/>
    </location>
</feature>
<feature type="binding site" evidence="2">
    <location>
        <position position="108"/>
    </location>
    <ligand>
        <name>Zn(2+)</name>
        <dbReference type="ChEBI" id="CHEBI:29105"/>
    </ligand>
</feature>
<feature type="binding site" evidence="2">
    <location>
        <position position="112"/>
    </location>
    <ligand>
        <name>Zn(2+)</name>
        <dbReference type="ChEBI" id="CHEBI:29105"/>
    </ligand>
</feature>
<feature type="binding site" evidence="2">
    <location>
        <position position="208"/>
    </location>
    <ligand>
        <name>Zn(2+)</name>
        <dbReference type="ChEBI" id="CHEBI:29105"/>
    </ligand>
</feature>
<feature type="binding site" evidence="2">
    <location>
        <position position="212"/>
    </location>
    <ligand>
        <name>Zn(2+)</name>
        <dbReference type="ChEBI" id="CHEBI:29105"/>
    </ligand>
</feature>
<gene>
    <name type="primary">aarsd1-a</name>
</gene>
<name>AASDA_XENLA</name>
<reference key="1">
    <citation type="submission" date="2006-10" db="EMBL/GenBank/DDBJ databases">
        <authorList>
            <consortium name="NIH - Xenopus Gene Collection (XGC) project"/>
        </authorList>
    </citation>
    <scope>NUCLEOTIDE SEQUENCE [LARGE SCALE MRNA]</scope>
    <source>
        <tissue>Ovary</tissue>
    </source>
</reference>
<protein>
    <recommendedName>
        <fullName>Alanyl-tRNA editing protein Aarsd1-A</fullName>
    </recommendedName>
    <alternativeName>
        <fullName>Alanyl-tRNA synthetase domain-containing protein 1-A</fullName>
    </alternativeName>
</protein>
<sequence>MAFHCQRDCYATELLTEVVSCHPAQLKLENGGKKNTVSGFNVLLKDTVLFPEGGGQPDDRGFIGEVPVLRVIRQGPDAVHFVASPLDPATEVLVKIDWNRRFDHMQQHSGQHLVTAIADSLYGFKTTSWDLGRQRSVIELDTPLVTTEQLEAIEKIANQKIREHVPVHVRLITVDDPEFDMVRSRGLPDDHAGPVRIIDIEGVDANMCCGTHVRNLSDLQMIKILGTEKGKKNKTNLIFLSGERVLKYVSRSYNTEKTLTSLLKNGPEEHIEAVDKLQKSVKALQKNNLTLLRDLAVLTAENFKSKADRGKFFSLHRKEGDNEFMNIIANVIGTEDTLLFLTIGDEKTSGLFLLAGPPGIVEKFGPRVCEILDGKGAGKCGRFQGKANKMSQRAEVEVLLQKVISSVEITQE</sequence>
<dbReference type="EMBL" id="BC124925">
    <property type="protein sequence ID" value="AAI24926.1"/>
    <property type="molecule type" value="mRNA"/>
</dbReference>
<dbReference type="SMR" id="Q08B09"/>
<dbReference type="AGR" id="Xenbase:XB-GENE-5787129"/>
<dbReference type="Xenbase" id="XB-GENE-5787129">
    <property type="gene designation" value="aarsd1.L"/>
</dbReference>
<dbReference type="Proteomes" id="UP000186698">
    <property type="component" value="Unplaced"/>
</dbReference>
<dbReference type="GO" id="GO:0005737">
    <property type="term" value="C:cytoplasm"/>
    <property type="evidence" value="ECO:0007669"/>
    <property type="project" value="UniProtKB-SubCell"/>
</dbReference>
<dbReference type="GO" id="GO:0004813">
    <property type="term" value="F:alanine-tRNA ligase activity"/>
    <property type="evidence" value="ECO:0007669"/>
    <property type="project" value="InterPro"/>
</dbReference>
<dbReference type="GO" id="GO:0005524">
    <property type="term" value="F:ATP binding"/>
    <property type="evidence" value="ECO:0007669"/>
    <property type="project" value="InterPro"/>
</dbReference>
<dbReference type="GO" id="GO:0046872">
    <property type="term" value="F:metal ion binding"/>
    <property type="evidence" value="ECO:0007669"/>
    <property type="project" value="UniProtKB-KW"/>
</dbReference>
<dbReference type="GO" id="GO:0003676">
    <property type="term" value="F:nucleic acid binding"/>
    <property type="evidence" value="ECO:0007669"/>
    <property type="project" value="InterPro"/>
</dbReference>
<dbReference type="GO" id="GO:0002196">
    <property type="term" value="F:Ser-tRNA(Ala) deacylase activity"/>
    <property type="evidence" value="ECO:0000318"/>
    <property type="project" value="GO_Central"/>
</dbReference>
<dbReference type="GO" id="GO:0006419">
    <property type="term" value="P:alanyl-tRNA aminoacylation"/>
    <property type="evidence" value="ECO:0007669"/>
    <property type="project" value="InterPro"/>
</dbReference>
<dbReference type="GO" id="GO:0006450">
    <property type="term" value="P:regulation of translational fidelity"/>
    <property type="evidence" value="ECO:0000318"/>
    <property type="project" value="GO_Central"/>
</dbReference>
<dbReference type="FunFam" id="2.40.30.130:FF:000003">
    <property type="entry name" value="alanyl-tRNA editing protein Aarsd1"/>
    <property type="match status" value="1"/>
</dbReference>
<dbReference type="FunFam" id="3.30.980.10:FF:000007">
    <property type="entry name" value="alanyl-tRNA editing protein Aarsd1"/>
    <property type="match status" value="1"/>
</dbReference>
<dbReference type="Gene3D" id="2.40.30.130">
    <property type="match status" value="1"/>
</dbReference>
<dbReference type="Gene3D" id="3.30.980.10">
    <property type="entry name" value="Threonyl-trna Synthetase, Chain A, domain 2"/>
    <property type="match status" value="1"/>
</dbReference>
<dbReference type="InterPro" id="IPR018165">
    <property type="entry name" value="Ala-tRNA-synth_IIc_core"/>
</dbReference>
<dbReference type="InterPro" id="IPR051335">
    <property type="entry name" value="Alanyl-tRNA_Editing_Enzymes"/>
</dbReference>
<dbReference type="InterPro" id="IPR018163">
    <property type="entry name" value="Thr/Ala-tRNA-synth_IIc_edit"/>
</dbReference>
<dbReference type="InterPro" id="IPR009000">
    <property type="entry name" value="Transl_B-barrel_sf"/>
</dbReference>
<dbReference type="InterPro" id="IPR012947">
    <property type="entry name" value="tRNA_SAD"/>
</dbReference>
<dbReference type="PANTHER" id="PTHR43462">
    <property type="entry name" value="ALANYL-TRNA EDITING PROTEIN"/>
    <property type="match status" value="1"/>
</dbReference>
<dbReference type="PANTHER" id="PTHR43462:SF1">
    <property type="entry name" value="ALANYL-TRNA EDITING PROTEIN AARSD1"/>
    <property type="match status" value="1"/>
</dbReference>
<dbReference type="Pfam" id="PF07973">
    <property type="entry name" value="tRNA_SAD"/>
    <property type="match status" value="1"/>
</dbReference>
<dbReference type="SMART" id="SM00863">
    <property type="entry name" value="tRNA_SAD"/>
    <property type="match status" value="1"/>
</dbReference>
<dbReference type="SUPFAM" id="SSF55186">
    <property type="entry name" value="ThrRS/AlaRS common domain"/>
    <property type="match status" value="1"/>
</dbReference>
<dbReference type="SUPFAM" id="SSF50447">
    <property type="entry name" value="Translation proteins"/>
    <property type="match status" value="1"/>
</dbReference>
<dbReference type="PROSITE" id="PS50860">
    <property type="entry name" value="AA_TRNA_LIGASE_II_ALA"/>
    <property type="match status" value="1"/>
</dbReference>
<keyword id="KW-0963">Cytoplasm</keyword>
<keyword id="KW-0479">Metal-binding</keyword>
<keyword id="KW-0648">Protein biosynthesis</keyword>
<keyword id="KW-1185">Reference proteome</keyword>
<keyword id="KW-0862">Zinc</keyword>
<accession>Q08B09</accession>
<comment type="function">
    <text evidence="1">Functions in trans to edit the amino acid moiety from incorrectly charged tRNA(Ala).</text>
</comment>
<comment type="cofactor">
    <cofactor evidence="3">
        <name>Zn(2+)</name>
        <dbReference type="ChEBI" id="CHEBI:29105"/>
    </cofactor>
    <text evidence="3">Binds 1 zinc ion per subunit.</text>
</comment>
<comment type="subcellular location">
    <subcellularLocation>
        <location evidence="1">Cytoplasm</location>
    </subcellularLocation>
</comment>
<comment type="similarity">
    <text evidence="3">Belongs to the class-II aminoacyl-tRNA synthetase family. Alax-L subfamily.</text>
</comment>
<organism>
    <name type="scientific">Xenopus laevis</name>
    <name type="common">African clawed frog</name>
    <dbReference type="NCBI Taxonomy" id="8355"/>
    <lineage>
        <taxon>Eukaryota</taxon>
        <taxon>Metazoa</taxon>
        <taxon>Chordata</taxon>
        <taxon>Craniata</taxon>
        <taxon>Vertebrata</taxon>
        <taxon>Euteleostomi</taxon>
        <taxon>Amphibia</taxon>
        <taxon>Batrachia</taxon>
        <taxon>Anura</taxon>
        <taxon>Pipoidea</taxon>
        <taxon>Pipidae</taxon>
        <taxon>Xenopodinae</taxon>
        <taxon>Xenopus</taxon>
        <taxon>Xenopus</taxon>
    </lineage>
</organism>
<proteinExistence type="evidence at transcript level"/>
<evidence type="ECO:0000250" key="1"/>
<evidence type="ECO:0000255" key="2"/>
<evidence type="ECO:0000305" key="3"/>